<comment type="function">
    <text evidence="2">Component of the cytochrome c oxidase, the last enzyme in the mitochondrial electron transport chain which drives oxidative phosphorylation. The respiratory chain contains 3 multisubunit complexes succinate dehydrogenase (complex II, CII), ubiquinol-cytochrome c oxidoreductase (cytochrome b-c1 complex, complex III, CIII) and cytochrome c oxidase (complex IV, CIV), that cooperate to transfer electrons derived from NADH and succinate to molecular oxygen, creating an electrochemical gradient over the inner membrane that drives transmembrane transport and the ATP synthase. Cytochrome c oxidase is the component of the respiratory chain that catalyzes the reduction of oxygen to water. Electrons originating from reduced cytochrome c in the intermembrane space (IMS) are transferred via the dinuclear copper A center (CU(A)) of subunit 2 and heme A of subunit 1 to the active site in subunit 1, a binuclear center (BNC) formed by heme A3 and copper B (CU(B)). The BNC reduces molecular oxygen to 2 water molecules unsing 4 electrons from cytochrome c in the IMS and 4 protons from the mitochondrial matrix.</text>
</comment>
<comment type="pathway">
    <text evidence="2">Energy metabolism; oxidative phosphorylation.</text>
</comment>
<comment type="subunit">
    <text evidence="1">Component of the cytochrome c oxidase (complex IV, CIV), a multisubunit enzyme composed of 14 subunits. The complex is composed of a catalytic core of 3 subunits MT-CO1, MT-CO2 and MT-CO3, encoded in the mitochondrial DNA, and 11 supernumerary subunits COX4I, COX5A, COX5B, COX6A, COX6B, COX6C, COX7A, COX7B, COX7C, COX8 and NDUFA4, which are encoded in the nuclear genome. The complex exists as a monomer or a dimer and forms supercomplexes (SCs) in the inner mitochondrial membrane with NADH-ubiquinone oxidoreductase (complex I, CI) and ubiquinol-cytochrome c oxidoreductase (cytochrome b-c1 complex, complex III, CIII), resulting in different assemblies (supercomplex SCI(1)III(2)IV(1) and megacomplex MCI(2)III(2)IV(2)).</text>
</comment>
<comment type="subcellular location">
    <subcellularLocation>
        <location evidence="1">Mitochondrion inner membrane</location>
        <topology evidence="1">Single-pass membrane protein</topology>
    </subcellularLocation>
</comment>
<comment type="tissue specificity">
    <text>Liver specific isoform.</text>
</comment>
<comment type="similarity">
    <text evidence="3">Belongs to the cytochrome c oxidase subunit 6A family.</text>
</comment>
<name>CX6A1_SHEEP</name>
<accession>P61903</accession>
<accession>Q9TR34</accession>
<sequence>SGGAHGEEGSARMXKALTYF</sequence>
<keyword id="KW-0903">Direct protein sequencing</keyword>
<keyword id="KW-0472">Membrane</keyword>
<keyword id="KW-0496">Mitochondrion</keyword>
<keyword id="KW-0999">Mitochondrion inner membrane</keyword>
<keyword id="KW-0560">Oxidoreductase</keyword>
<keyword id="KW-1185">Reference proteome</keyword>
<keyword id="KW-0812">Transmembrane</keyword>
<keyword id="KW-1133">Transmembrane helix</keyword>
<feature type="chain" id="PRO_0000193449" description="Cytochrome c oxidase subunit 6A1, mitochondrial">
    <location>
        <begin position="1"/>
        <end position="20" status="greater than"/>
    </location>
</feature>
<feature type="non-terminal residue">
    <location>
        <position position="20"/>
    </location>
</feature>
<reference key="1">
    <citation type="journal article" date="1995" name="Comp. Biochem. Physiol.">
        <title>Species-specific expression of cytochrome c oxidase isozymes.</title>
        <authorList>
            <person name="Linder D."/>
            <person name="Freund R."/>
            <person name="Kadenbach B."/>
        </authorList>
    </citation>
    <scope>PROTEIN SEQUENCE</scope>
    <source>
        <tissue>Liver</tissue>
    </source>
</reference>
<proteinExistence type="evidence at protein level"/>
<dbReference type="STRING" id="9940.ENSOARP00000013166"/>
<dbReference type="PaxDb" id="9940-ENSOARP00000013166"/>
<dbReference type="eggNOG" id="KOG3469">
    <property type="taxonomic scope" value="Eukaryota"/>
</dbReference>
<dbReference type="UniPathway" id="UPA00705"/>
<dbReference type="Proteomes" id="UP000002356">
    <property type="component" value="Unplaced"/>
</dbReference>
<dbReference type="GO" id="GO:0005743">
    <property type="term" value="C:mitochondrial inner membrane"/>
    <property type="evidence" value="ECO:0007669"/>
    <property type="project" value="UniProtKB-SubCell"/>
</dbReference>
<dbReference type="GO" id="GO:0016491">
    <property type="term" value="F:oxidoreductase activity"/>
    <property type="evidence" value="ECO:0007669"/>
    <property type="project" value="UniProtKB-KW"/>
</dbReference>
<dbReference type="GO" id="GO:0006119">
    <property type="term" value="P:oxidative phosphorylation"/>
    <property type="evidence" value="ECO:0007669"/>
    <property type="project" value="UniProtKB-UniPathway"/>
</dbReference>
<evidence type="ECO:0000250" key="1">
    <source>
        <dbReference type="UniProtKB" id="P12074"/>
    </source>
</evidence>
<evidence type="ECO:0000250" key="2">
    <source>
        <dbReference type="UniProtKB" id="P32799"/>
    </source>
</evidence>
<evidence type="ECO:0000305" key="3"/>
<protein>
    <recommendedName>
        <fullName>Cytochrome c oxidase subunit 6A1, mitochondrial</fullName>
    </recommendedName>
    <alternativeName>
        <fullName>Cytochrome c oxidase polypeptide VIa-liver</fullName>
    </alternativeName>
</protein>
<gene>
    <name type="primary">COX6A1</name>
</gene>
<organism>
    <name type="scientific">Ovis aries</name>
    <name type="common">Sheep</name>
    <dbReference type="NCBI Taxonomy" id="9940"/>
    <lineage>
        <taxon>Eukaryota</taxon>
        <taxon>Metazoa</taxon>
        <taxon>Chordata</taxon>
        <taxon>Craniata</taxon>
        <taxon>Vertebrata</taxon>
        <taxon>Euteleostomi</taxon>
        <taxon>Mammalia</taxon>
        <taxon>Eutheria</taxon>
        <taxon>Laurasiatheria</taxon>
        <taxon>Artiodactyla</taxon>
        <taxon>Ruminantia</taxon>
        <taxon>Pecora</taxon>
        <taxon>Bovidae</taxon>
        <taxon>Caprinae</taxon>
        <taxon>Ovis</taxon>
    </lineage>
</organism>